<feature type="chain" id="PRO_0000101550" description="Ribosomal RNA small subunit methyltransferase A">
    <location>
        <begin position="1"/>
        <end position="280"/>
    </location>
</feature>
<feature type="binding site" evidence="1">
    <location>
        <position position="30"/>
    </location>
    <ligand>
        <name>S-adenosyl-L-methionine</name>
        <dbReference type="ChEBI" id="CHEBI:59789"/>
    </ligand>
</feature>
<feature type="binding site" evidence="1">
    <location>
        <position position="32"/>
    </location>
    <ligand>
        <name>S-adenosyl-L-methionine</name>
        <dbReference type="ChEBI" id="CHEBI:59789"/>
    </ligand>
</feature>
<feature type="binding site" evidence="1">
    <location>
        <position position="57"/>
    </location>
    <ligand>
        <name>S-adenosyl-L-methionine</name>
        <dbReference type="ChEBI" id="CHEBI:59789"/>
    </ligand>
</feature>
<feature type="binding site" evidence="1">
    <location>
        <position position="78"/>
    </location>
    <ligand>
        <name>S-adenosyl-L-methionine</name>
        <dbReference type="ChEBI" id="CHEBI:59789"/>
    </ligand>
</feature>
<feature type="binding site" evidence="1">
    <location>
        <position position="108"/>
    </location>
    <ligand>
        <name>S-adenosyl-L-methionine</name>
        <dbReference type="ChEBI" id="CHEBI:59789"/>
    </ligand>
</feature>
<feature type="binding site" evidence="1">
    <location>
        <position position="125"/>
    </location>
    <ligand>
        <name>S-adenosyl-L-methionine</name>
        <dbReference type="ChEBI" id="CHEBI:59789"/>
    </ligand>
</feature>
<organism>
    <name type="scientific">Leifsonia xyli subsp. xyli (strain CTCB07)</name>
    <dbReference type="NCBI Taxonomy" id="281090"/>
    <lineage>
        <taxon>Bacteria</taxon>
        <taxon>Bacillati</taxon>
        <taxon>Actinomycetota</taxon>
        <taxon>Actinomycetes</taxon>
        <taxon>Micrococcales</taxon>
        <taxon>Microbacteriaceae</taxon>
        <taxon>Leifsonia</taxon>
    </lineage>
</organism>
<evidence type="ECO:0000255" key="1">
    <source>
        <dbReference type="HAMAP-Rule" id="MF_00607"/>
    </source>
</evidence>
<comment type="function">
    <text evidence="1">Specifically dimethylates two adjacent adenosines (A1518 and A1519) in the loop of a conserved hairpin near the 3'-end of 16S rRNA in the 30S particle. May play a critical role in biogenesis of 30S subunits.</text>
</comment>
<comment type="catalytic activity">
    <reaction evidence="1">
        <text>adenosine(1518)/adenosine(1519) in 16S rRNA + 4 S-adenosyl-L-methionine = N(6)-dimethyladenosine(1518)/N(6)-dimethyladenosine(1519) in 16S rRNA + 4 S-adenosyl-L-homocysteine + 4 H(+)</text>
        <dbReference type="Rhea" id="RHEA:19609"/>
        <dbReference type="Rhea" id="RHEA-COMP:10232"/>
        <dbReference type="Rhea" id="RHEA-COMP:10233"/>
        <dbReference type="ChEBI" id="CHEBI:15378"/>
        <dbReference type="ChEBI" id="CHEBI:57856"/>
        <dbReference type="ChEBI" id="CHEBI:59789"/>
        <dbReference type="ChEBI" id="CHEBI:74411"/>
        <dbReference type="ChEBI" id="CHEBI:74493"/>
        <dbReference type="EC" id="2.1.1.182"/>
    </reaction>
</comment>
<comment type="subcellular location">
    <subcellularLocation>
        <location evidence="1">Cytoplasm</location>
    </subcellularLocation>
</comment>
<comment type="similarity">
    <text evidence="1">Belongs to the class I-like SAM-binding methyltransferase superfamily. rRNA adenine N(6)-methyltransferase family. RsmA subfamily.</text>
</comment>
<proteinExistence type="inferred from homology"/>
<keyword id="KW-0963">Cytoplasm</keyword>
<keyword id="KW-0489">Methyltransferase</keyword>
<keyword id="KW-1185">Reference proteome</keyword>
<keyword id="KW-0694">RNA-binding</keyword>
<keyword id="KW-0698">rRNA processing</keyword>
<keyword id="KW-0949">S-adenosyl-L-methionine</keyword>
<keyword id="KW-0808">Transferase</keyword>
<dbReference type="EC" id="2.1.1.182" evidence="1"/>
<dbReference type="EMBL" id="AE016822">
    <property type="protein sequence ID" value="AAT89505.1"/>
    <property type="molecule type" value="Genomic_DNA"/>
</dbReference>
<dbReference type="RefSeq" id="WP_011186493.1">
    <property type="nucleotide sequence ID" value="NC_006087.1"/>
</dbReference>
<dbReference type="SMR" id="Q6ADP1"/>
<dbReference type="STRING" id="281090.Lxx17490"/>
<dbReference type="KEGG" id="lxx:Lxx17490"/>
<dbReference type="eggNOG" id="COG0030">
    <property type="taxonomic scope" value="Bacteria"/>
</dbReference>
<dbReference type="HOGENOM" id="CLU_041220_1_1_11"/>
<dbReference type="Proteomes" id="UP000001306">
    <property type="component" value="Chromosome"/>
</dbReference>
<dbReference type="GO" id="GO:0005829">
    <property type="term" value="C:cytosol"/>
    <property type="evidence" value="ECO:0007669"/>
    <property type="project" value="TreeGrafter"/>
</dbReference>
<dbReference type="GO" id="GO:0052908">
    <property type="term" value="F:16S rRNA (adenine(1518)-N(6)/adenine(1519)-N(6))-dimethyltransferase activity"/>
    <property type="evidence" value="ECO:0007669"/>
    <property type="project" value="UniProtKB-EC"/>
</dbReference>
<dbReference type="GO" id="GO:0003723">
    <property type="term" value="F:RNA binding"/>
    <property type="evidence" value="ECO:0007669"/>
    <property type="project" value="UniProtKB-KW"/>
</dbReference>
<dbReference type="FunFam" id="3.40.50.150:FF:000023">
    <property type="entry name" value="Ribosomal RNA small subunit methyltransferase A"/>
    <property type="match status" value="1"/>
</dbReference>
<dbReference type="Gene3D" id="1.10.8.100">
    <property type="entry name" value="Ribosomal RNA adenine dimethylase-like, domain 2"/>
    <property type="match status" value="1"/>
</dbReference>
<dbReference type="Gene3D" id="3.40.50.150">
    <property type="entry name" value="Vaccinia Virus protein VP39"/>
    <property type="match status" value="1"/>
</dbReference>
<dbReference type="HAMAP" id="MF_00607">
    <property type="entry name" value="16SrRNA_methyltr_A"/>
    <property type="match status" value="1"/>
</dbReference>
<dbReference type="InterPro" id="IPR001737">
    <property type="entry name" value="KsgA/Erm"/>
</dbReference>
<dbReference type="InterPro" id="IPR023165">
    <property type="entry name" value="rRNA_Ade_diMease-like_C"/>
</dbReference>
<dbReference type="InterPro" id="IPR020596">
    <property type="entry name" value="rRNA_Ade_Mease_Trfase_CS"/>
</dbReference>
<dbReference type="InterPro" id="IPR020598">
    <property type="entry name" value="rRNA_Ade_methylase_Trfase_N"/>
</dbReference>
<dbReference type="InterPro" id="IPR011530">
    <property type="entry name" value="rRNA_adenine_dimethylase"/>
</dbReference>
<dbReference type="InterPro" id="IPR029063">
    <property type="entry name" value="SAM-dependent_MTases_sf"/>
</dbReference>
<dbReference type="NCBIfam" id="TIGR00755">
    <property type="entry name" value="ksgA"/>
    <property type="match status" value="1"/>
</dbReference>
<dbReference type="PANTHER" id="PTHR11727">
    <property type="entry name" value="DIMETHYLADENOSINE TRANSFERASE"/>
    <property type="match status" value="1"/>
</dbReference>
<dbReference type="PANTHER" id="PTHR11727:SF7">
    <property type="entry name" value="DIMETHYLADENOSINE TRANSFERASE-RELATED"/>
    <property type="match status" value="1"/>
</dbReference>
<dbReference type="Pfam" id="PF00398">
    <property type="entry name" value="RrnaAD"/>
    <property type="match status" value="1"/>
</dbReference>
<dbReference type="SMART" id="SM00650">
    <property type="entry name" value="rADc"/>
    <property type="match status" value="1"/>
</dbReference>
<dbReference type="SUPFAM" id="SSF53335">
    <property type="entry name" value="S-adenosyl-L-methionine-dependent methyltransferases"/>
    <property type="match status" value="1"/>
</dbReference>
<dbReference type="PROSITE" id="PS01131">
    <property type="entry name" value="RRNA_A_DIMETH"/>
    <property type="match status" value="1"/>
</dbReference>
<dbReference type="PROSITE" id="PS51689">
    <property type="entry name" value="SAM_RNA_A_N6_MT"/>
    <property type="match status" value="1"/>
</dbReference>
<sequence>MNELRLLGPAEIRDLAELIGVAPTKRLGQNFVIDANTVRRIVRVAGVEAGEVVVEVGPGLGSLTLGLLEAGARVVAVEIDGRLAERLPLTVAQLAPEAAGRLTVVHSDALAVTELPERPGRLVANLPYNVSVPVLLHLLERVPSLRSGVVMVQAEVGQRIAAGPGSKVYGAPSVKAAWYGVWRTAGTVSRQIFWPVPNVDSILVGFERHATEPGDDELRKRTFALVDAAFQQRRKTLRQSLAPVYGDPAAAGAALEAAGVAPRRRGEQLTLADFVRLAAR</sequence>
<reference key="1">
    <citation type="journal article" date="2004" name="Mol. Plant Microbe Interact.">
        <title>The genome sequence of the Gram-positive sugarcane pathogen Leifsonia xyli subsp. xyli.</title>
        <authorList>
            <person name="Monteiro-Vitorello C.B."/>
            <person name="Camargo L.E.A."/>
            <person name="Van Sluys M.A."/>
            <person name="Kitajima J.P."/>
            <person name="Truffi D."/>
            <person name="do Amaral A.M."/>
            <person name="Harakava R."/>
            <person name="de Oliveira J.C.F."/>
            <person name="Wood D."/>
            <person name="de Oliveira M.C."/>
            <person name="Miyaki C.Y."/>
            <person name="Takita M.A."/>
            <person name="da Silva A.C.R."/>
            <person name="Furlan L.R."/>
            <person name="Carraro D.M."/>
            <person name="Camarotte G."/>
            <person name="Almeida N.F. Jr."/>
            <person name="Carrer H."/>
            <person name="Coutinho L.L."/>
            <person name="El-Dorry H.A."/>
            <person name="Ferro M.I.T."/>
            <person name="Gagliardi P.R."/>
            <person name="Giglioti E."/>
            <person name="Goldman M.H.S."/>
            <person name="Goldman G.H."/>
            <person name="Kimura E.T."/>
            <person name="Ferro E.S."/>
            <person name="Kuramae E.E."/>
            <person name="Lemos E.G.M."/>
            <person name="Lemos M.V.F."/>
            <person name="Mauro S.M.Z."/>
            <person name="Machado M.A."/>
            <person name="Marino C.L."/>
            <person name="Menck C.F."/>
            <person name="Nunes L.R."/>
            <person name="Oliveira R.C."/>
            <person name="Pereira G.G."/>
            <person name="Siqueira W."/>
            <person name="de Souza A.A."/>
            <person name="Tsai S.M."/>
            <person name="Zanca A.S."/>
            <person name="Simpson A.J.G."/>
            <person name="Brumbley S.M."/>
            <person name="Setubal J.C."/>
        </authorList>
    </citation>
    <scope>NUCLEOTIDE SEQUENCE [LARGE SCALE GENOMIC DNA]</scope>
    <source>
        <strain>CTCB07</strain>
    </source>
</reference>
<protein>
    <recommendedName>
        <fullName evidence="1">Ribosomal RNA small subunit methyltransferase A</fullName>
        <ecNumber evidence="1">2.1.1.182</ecNumber>
    </recommendedName>
    <alternativeName>
        <fullName evidence="1">16S rRNA (adenine(1518)-N(6)/adenine(1519)-N(6))-dimethyltransferase</fullName>
    </alternativeName>
    <alternativeName>
        <fullName evidence="1">16S rRNA dimethyladenosine transferase</fullName>
    </alternativeName>
    <alternativeName>
        <fullName evidence="1">16S rRNA dimethylase</fullName>
    </alternativeName>
    <alternativeName>
        <fullName evidence="1">S-adenosylmethionine-6-N', N'-adenosyl(rRNA) dimethyltransferase</fullName>
    </alternativeName>
</protein>
<gene>
    <name evidence="1" type="primary">rsmA</name>
    <name evidence="1" type="synonym">ksgA</name>
    <name type="ordered locus">Lxx17490</name>
</gene>
<accession>Q6ADP1</accession>
<name>RSMA_LEIXX</name>